<dbReference type="EMBL" id="AB080201">
    <property type="protein sequence ID" value="BAB85494.1"/>
    <property type="molecule type" value="mRNA"/>
</dbReference>
<dbReference type="EMBL" id="AY569308">
    <property type="protein sequence ID" value="AAS75452.1"/>
    <property type="molecule type" value="mRNA"/>
</dbReference>
<dbReference type="EMBL" id="FO080515">
    <property type="protein sequence ID" value="CCD64313.1"/>
    <property type="molecule type" value="Genomic_DNA"/>
</dbReference>
<dbReference type="EMBL" id="FO080515">
    <property type="protein sequence ID" value="CCD64315.1"/>
    <property type="molecule type" value="Genomic_DNA"/>
</dbReference>
<dbReference type="EMBL" id="FO080515">
    <property type="protein sequence ID" value="CCD64314.1"/>
    <property type="molecule type" value="Genomic_DNA"/>
</dbReference>
<dbReference type="RefSeq" id="NP_001024714.1">
    <molecule id="Q8WQC0-3"/>
    <property type="nucleotide sequence ID" value="NM_001029543.5"/>
</dbReference>
<dbReference type="RefSeq" id="NP_001024715.1">
    <molecule id="Q8WQC0-2"/>
    <property type="nucleotide sequence ID" value="NM_001029544.6"/>
</dbReference>
<dbReference type="RefSeq" id="NP_508610.3">
    <molecule id="Q8WQC0-1"/>
    <property type="nucleotide sequence ID" value="NM_076209.4"/>
</dbReference>
<dbReference type="SMR" id="Q8WQC0"/>
<dbReference type="BioGRID" id="45583">
    <property type="interactions" value="9"/>
</dbReference>
<dbReference type="FunCoup" id="Q8WQC0">
    <property type="interactions" value="9"/>
</dbReference>
<dbReference type="IntAct" id="Q8WQC0">
    <property type="interactions" value="3"/>
</dbReference>
<dbReference type="STRING" id="6239.F56B6.2a.1"/>
<dbReference type="iPTMnet" id="Q8WQC0"/>
<dbReference type="PaxDb" id="6239-F56B6.2a"/>
<dbReference type="EnsemblMetazoa" id="F56B6.2a.1">
    <molecule id="Q8WQC0-1"/>
    <property type="protein sequence ID" value="F56B6.2a.1"/>
    <property type="gene ID" value="WBGene00004350"/>
</dbReference>
<dbReference type="EnsemblMetazoa" id="F56B6.2b.1">
    <molecule id="Q8WQC0-3"/>
    <property type="protein sequence ID" value="F56B6.2b.1"/>
    <property type="gene ID" value="WBGene00004350"/>
</dbReference>
<dbReference type="EnsemblMetazoa" id="F56B6.2c.1">
    <molecule id="Q8WQC0-2"/>
    <property type="protein sequence ID" value="F56B6.2c.1"/>
    <property type="gene ID" value="WBGene00004350"/>
</dbReference>
<dbReference type="GeneID" id="180645"/>
<dbReference type="KEGG" id="cel:CELE_F56B6.2"/>
<dbReference type="UCSC" id="F56B6.2a">
    <molecule id="Q8WQC0-1"/>
    <property type="organism name" value="c. elegans"/>
</dbReference>
<dbReference type="AGR" id="WB:WBGene00004350"/>
<dbReference type="CTD" id="180645"/>
<dbReference type="WormBase" id="F56B6.2a">
    <molecule id="Q8WQC0-1"/>
    <property type="protein sequence ID" value="CE29403"/>
    <property type="gene ID" value="WBGene00004350"/>
    <property type="gene designation" value="rgs-7"/>
</dbReference>
<dbReference type="WormBase" id="F56B6.2b">
    <molecule id="Q8WQC0-3"/>
    <property type="protein sequence ID" value="CE30151"/>
    <property type="gene ID" value="WBGene00004350"/>
    <property type="gene designation" value="rgs-7"/>
</dbReference>
<dbReference type="WormBase" id="F56B6.2c">
    <molecule id="Q8WQC0-2"/>
    <property type="protein sequence ID" value="CE29404"/>
    <property type="gene ID" value="WBGene00004350"/>
    <property type="gene designation" value="rgs-7"/>
</dbReference>
<dbReference type="eggNOG" id="KOG3589">
    <property type="taxonomic scope" value="Eukaryota"/>
</dbReference>
<dbReference type="HOGENOM" id="CLU_358341_0_0_1"/>
<dbReference type="InParanoid" id="Q8WQC0"/>
<dbReference type="OrthoDB" id="196547at2759"/>
<dbReference type="Reactome" id="R-CEL-416476">
    <property type="pathway name" value="G alpha (q) signalling events"/>
</dbReference>
<dbReference type="Reactome" id="R-CEL-418594">
    <property type="pathway name" value="G alpha (i) signalling events"/>
</dbReference>
<dbReference type="Reactome" id="R-CEL-418597">
    <property type="pathway name" value="G alpha (z) signalling events"/>
</dbReference>
<dbReference type="PRO" id="PR:Q8WQC0"/>
<dbReference type="Proteomes" id="UP000001940">
    <property type="component" value="Chromosome X"/>
</dbReference>
<dbReference type="Bgee" id="WBGene00004350">
    <property type="expression patterns" value="Expressed in embryo and 4 other cell types or tissues"/>
</dbReference>
<dbReference type="ExpressionAtlas" id="Q8WQC0">
    <property type="expression patterns" value="baseline and differential"/>
</dbReference>
<dbReference type="GO" id="GO:0005938">
    <property type="term" value="C:cell cortex"/>
    <property type="evidence" value="ECO:0000314"/>
    <property type="project" value="WormBase"/>
</dbReference>
<dbReference type="GO" id="GO:0005096">
    <property type="term" value="F:GTPase activator activity"/>
    <property type="evidence" value="ECO:0000314"/>
    <property type="project" value="WormBase"/>
</dbReference>
<dbReference type="GO" id="GO:0009968">
    <property type="term" value="P:negative regulation of signal transduction"/>
    <property type="evidence" value="ECO:0007669"/>
    <property type="project" value="UniProtKB-KW"/>
</dbReference>
<dbReference type="FunFam" id="1.10.167.10:FF:000038">
    <property type="entry name" value="Regulator of G-protein signaling rgs-7"/>
    <property type="match status" value="1"/>
</dbReference>
<dbReference type="Gene3D" id="2.60.40.150">
    <property type="entry name" value="C2 domain"/>
    <property type="match status" value="1"/>
</dbReference>
<dbReference type="Gene3D" id="1.10.167.10">
    <property type="entry name" value="Regulator of G-protein Signalling 4, domain 2"/>
    <property type="match status" value="1"/>
</dbReference>
<dbReference type="InterPro" id="IPR000008">
    <property type="entry name" value="C2_dom"/>
</dbReference>
<dbReference type="InterPro" id="IPR035892">
    <property type="entry name" value="C2_domain_sf"/>
</dbReference>
<dbReference type="InterPro" id="IPR016137">
    <property type="entry name" value="RGS"/>
</dbReference>
<dbReference type="InterPro" id="IPR036305">
    <property type="entry name" value="RGS_sf"/>
</dbReference>
<dbReference type="InterPro" id="IPR044926">
    <property type="entry name" value="RGS_subdomain_2"/>
</dbReference>
<dbReference type="PANTHER" id="PTHR10845">
    <property type="entry name" value="REGULATOR OF G PROTEIN SIGNALING"/>
    <property type="match status" value="1"/>
</dbReference>
<dbReference type="PANTHER" id="PTHR10845:SF259">
    <property type="entry name" value="RGS DOMAIN-CONTAINING PROTEIN-RELATED"/>
    <property type="match status" value="1"/>
</dbReference>
<dbReference type="Pfam" id="PF00168">
    <property type="entry name" value="C2"/>
    <property type="match status" value="1"/>
</dbReference>
<dbReference type="Pfam" id="PF00615">
    <property type="entry name" value="RGS"/>
    <property type="match status" value="1"/>
</dbReference>
<dbReference type="PRINTS" id="PR01301">
    <property type="entry name" value="RGSPROTEIN"/>
</dbReference>
<dbReference type="SMART" id="SM00239">
    <property type="entry name" value="C2"/>
    <property type="match status" value="1"/>
</dbReference>
<dbReference type="SMART" id="SM00315">
    <property type="entry name" value="RGS"/>
    <property type="match status" value="1"/>
</dbReference>
<dbReference type="SUPFAM" id="SSF49562">
    <property type="entry name" value="C2 domain (Calcium/lipid-binding domain, CaLB)"/>
    <property type="match status" value="1"/>
</dbReference>
<dbReference type="SUPFAM" id="SSF48097">
    <property type="entry name" value="Regulator of G-protein signaling, RGS"/>
    <property type="match status" value="1"/>
</dbReference>
<dbReference type="PROSITE" id="PS50004">
    <property type="entry name" value="C2"/>
    <property type="match status" value="1"/>
</dbReference>
<dbReference type="PROSITE" id="PS50132">
    <property type="entry name" value="RGS"/>
    <property type="match status" value="1"/>
</dbReference>
<organism>
    <name type="scientific">Caenorhabditis elegans</name>
    <dbReference type="NCBI Taxonomy" id="6239"/>
    <lineage>
        <taxon>Eukaryota</taxon>
        <taxon>Metazoa</taxon>
        <taxon>Ecdysozoa</taxon>
        <taxon>Nematoda</taxon>
        <taxon>Chromadorea</taxon>
        <taxon>Rhabditida</taxon>
        <taxon>Rhabditina</taxon>
        <taxon>Rhabditomorpha</taxon>
        <taxon>Rhabditoidea</taxon>
        <taxon>Rhabditidae</taxon>
        <taxon>Peloderinae</taxon>
        <taxon>Caenorhabditis</taxon>
    </lineage>
</organism>
<keyword id="KW-0025">Alternative splicing</keyword>
<keyword id="KW-1185">Reference proteome</keyword>
<keyword id="KW-0734">Signal transduction inhibitor</keyword>
<reference key="1">
    <citation type="journal article" date="2003" name="Life Sci.">
        <title>Characterization of a novel C. elegans RGS protein with a C2 domain: evidence for direct association between C2 domain and Galphaq subunit.</title>
        <authorList>
            <person name="Sato M."/>
            <person name="Moroi K."/>
            <person name="Nishiyama M."/>
            <person name="Zhou J."/>
            <person name="Usui H."/>
            <person name="Kasuya Y."/>
            <person name="Fukuda M."/>
            <person name="Kohara Y."/>
            <person name="Komuro I."/>
            <person name="Kimura S."/>
        </authorList>
    </citation>
    <scope>NUCLEOTIDE SEQUENCE [MRNA] (ISOFORM C)</scope>
</reference>
<reference key="2">
    <citation type="submission" date="2004-03" db="EMBL/GenBank/DDBJ databases">
        <title>RGS-7 completes a receptor-independent G protein cycle to regulate centrosome movements in Caenorhabditis elegans.</title>
        <authorList>
            <person name="Hess H.A."/>
            <person name="Koelle M.R."/>
        </authorList>
    </citation>
    <scope>NUCLEOTIDE SEQUENCE [MRNA] (ISOFORM A)</scope>
</reference>
<reference key="3">
    <citation type="journal article" date="1998" name="Science">
        <title>Genome sequence of the nematode C. elegans: a platform for investigating biology.</title>
        <authorList>
            <consortium name="The C. elegans sequencing consortium"/>
        </authorList>
    </citation>
    <scope>NUCLEOTIDE SEQUENCE [LARGE SCALE GENOMIC DNA]</scope>
    <scope>ALTERNATIVE SPLICING</scope>
    <source>
        <strain>Bristol N2</strain>
    </source>
</reference>
<sequence length="819" mass="92590">MSDEDADEYDDQSSISSVSDDDDFSGSESESYQDTTESTGPSEATTDEMLWGRRRAPVCGIAAQAVRRQILMNQQHEPNVLGNNKKVYQTFGSTPQLANERHKEMYSQIRRGDDSSFRSRDRFVPPRRPRMGYGSSDLSAIEEMSPIRSSTYSSSSEAHRLSSLRAQTEWKPQLTSTTTSFQPLSPMNHHDKENGPFKAPMSPVCSSTPRSQRMYRKNPKYRRQFGSSLQLSESRLEESTSQESERAVTPESWMEHNNENEHPDQMMFAKPKQGSFPRPEAFGLDNAYAKHKDIRGIIFLSMSLCGRRLTLNVQNAAYFCSAARPTSVCSYVSAVLCHRPSSQSSSSSRQYRQRPDECYRTRLVTNCNSPSFDESFYFTFSENCVRDLLIVTVYEMDSNNAEKKRILGCMTFPVSRILKKASQVVGDPFPHYRRQDPMEDVEINNEGFFLLNKDQGRKQNFPQRKVRRQTFYEDPAFTGVSSAGSSVISNNTGGQMTMASPRLSVPNELTMGDYYRSTGSSDMRGRSTNNLLDYTSASSSTNGSAGGPEKLKLHRATLPSITTTTSENNSDDAKSLSPEQSPTDHHFLCPDDNGGVYGAGPAHSAIKKSSVRRAASFTFSPKHSSSKTNLRQLNGREEDKEKKRFLGPISRTLSYLRSKMDLALSTSSLYPSRDDVRQWEISFESLLNNKFGCALFRQFLKKEFSDENMDFWLECEEFKKMKDGKKSTTQKAIEIYSEFVAEHSPKEVNLDSDTRAATKAAVEAGCKPDTFALAQSRVEQLMSKDSYRRFLRDRLFLDLLESYEITDKEDKPSSSKDKN</sequence>
<proteinExistence type="evidence at protein level"/>
<evidence type="ECO:0000255" key="1">
    <source>
        <dbReference type="PROSITE-ProRule" id="PRU00041"/>
    </source>
</evidence>
<evidence type="ECO:0000255" key="2">
    <source>
        <dbReference type="PROSITE-ProRule" id="PRU00171"/>
    </source>
</evidence>
<evidence type="ECO:0000256" key="3">
    <source>
        <dbReference type="SAM" id="MobiDB-lite"/>
    </source>
</evidence>
<evidence type="ECO:0000303" key="4">
    <source>
    </source>
</evidence>
<evidence type="ECO:0000305" key="5"/>
<accession>Q8WQC0</accession>
<accession>Q95Q48</accession>
<accession>Q95Q49</accession>
<name>RGS7_CAEEL</name>
<feature type="chain" id="PRO_0000204241" description="Regulator of G-protein signaling rgs-7">
    <location>
        <begin position="1"/>
        <end position="819"/>
    </location>
</feature>
<feature type="domain" description="C2" evidence="1">
    <location>
        <begin position="290"/>
        <end position="429"/>
    </location>
</feature>
<feature type="domain" description="RGS" evidence="2">
    <location>
        <begin position="682"/>
        <end position="800"/>
    </location>
</feature>
<feature type="region of interest" description="Disordered" evidence="3">
    <location>
        <begin position="1"/>
        <end position="51"/>
    </location>
</feature>
<feature type="region of interest" description="Disordered" evidence="3">
    <location>
        <begin position="112"/>
        <end position="135"/>
    </location>
</feature>
<feature type="region of interest" description="Disordered" evidence="3">
    <location>
        <begin position="149"/>
        <end position="259"/>
    </location>
</feature>
<feature type="region of interest" description="Disordered" evidence="3">
    <location>
        <begin position="515"/>
        <end position="594"/>
    </location>
</feature>
<feature type="region of interest" description="Disordered" evidence="3">
    <location>
        <begin position="617"/>
        <end position="640"/>
    </location>
</feature>
<feature type="compositionally biased region" description="Acidic residues" evidence="3">
    <location>
        <begin position="1"/>
        <end position="11"/>
    </location>
</feature>
<feature type="compositionally biased region" description="Polar residues" evidence="3">
    <location>
        <begin position="32"/>
        <end position="44"/>
    </location>
</feature>
<feature type="compositionally biased region" description="Basic and acidic residues" evidence="3">
    <location>
        <begin position="112"/>
        <end position="124"/>
    </location>
</feature>
<feature type="compositionally biased region" description="Low complexity" evidence="3">
    <location>
        <begin position="149"/>
        <end position="166"/>
    </location>
</feature>
<feature type="compositionally biased region" description="Polar residues" evidence="3">
    <location>
        <begin position="173"/>
        <end position="185"/>
    </location>
</feature>
<feature type="compositionally biased region" description="Basic residues" evidence="3">
    <location>
        <begin position="213"/>
        <end position="223"/>
    </location>
</feature>
<feature type="compositionally biased region" description="Basic and acidic residues" evidence="3">
    <location>
        <begin position="234"/>
        <end position="259"/>
    </location>
</feature>
<feature type="compositionally biased region" description="Polar residues" evidence="3">
    <location>
        <begin position="517"/>
        <end position="533"/>
    </location>
</feature>
<feature type="compositionally biased region" description="Polar residues" evidence="3">
    <location>
        <begin position="559"/>
        <end position="568"/>
    </location>
</feature>
<feature type="compositionally biased region" description="Polar residues" evidence="3">
    <location>
        <begin position="617"/>
        <end position="632"/>
    </location>
</feature>
<feature type="splice variant" id="VSP_009312" description="In isoform b." evidence="5">
    <location>
        <begin position="1"/>
        <end position="395"/>
    </location>
</feature>
<feature type="splice variant" id="VSP_009311" description="In isoform c." evidence="4">
    <original>MSDEDADEYDDQSSISSVSDDDDFSGSESESYQDTTESTGPSEATTDEMLWGR</original>
    <variation>MTYTVRTKTKGLEALI</variation>
    <location>
        <begin position="1"/>
        <end position="53"/>
    </location>
</feature>
<gene>
    <name type="primary">rgs-7</name>
    <name type="ORF">F56B6.2</name>
</gene>
<protein>
    <recommendedName>
        <fullName>Regulator of G-protein signaling rgs-7</fullName>
    </recommendedName>
    <alternativeName>
        <fullName>Protein C2-RGS</fullName>
    </alternativeName>
    <alternativeName>
        <fullName>Regulator of G-protein signaling c2</fullName>
    </alternativeName>
</protein>
<comment type="function">
    <text>Inhibits signal transduction by increasing the GTPase activity of G protein alpha subunit egl-30 (G-alpha(q)), thereby driving it into its inactive GDP-bound form. May organize egl-30 into a stable multiprotein signaling complex, and thereby persistently inhibit egl-30 when triggered by calcium or phospholipids.</text>
</comment>
<comment type="subunit">
    <text>Interacts with egl-30.</text>
</comment>
<comment type="interaction">
    <interactant intactId="EBI-6499941">
        <id>Q8WQC0</id>
    </interactant>
    <interactant intactId="EBI-2923230">
        <id>H2KZ17</id>
        <label>dsh-1</label>
    </interactant>
    <organismsDiffer>false</organismsDiffer>
    <experiments>2</experiments>
</comment>
<comment type="alternative products">
    <event type="alternative splicing"/>
    <isoform>
        <id>Q8WQC0-1</id>
        <name>a</name>
        <sequence type="displayed"/>
    </isoform>
    <isoform>
        <id>Q8WQC0-2</id>
        <name>b</name>
        <sequence type="described" ref="VSP_009312"/>
    </isoform>
    <isoform>
        <id>Q8WQC0-3</id>
        <name>c</name>
        <sequence type="described" ref="VSP_009311"/>
    </isoform>
</comment>
<comment type="domain">
    <text>The C2 and the RGS domains are both required for its inhibitory effect on G-protein signaling.</text>
</comment>